<sequence length="566" mass="61548">MTTHNSQYSAETTHPDKQESSPAPTAAGTTASNVSTTGNATTPDASIALNADATPVADVPPRLFGSFVEHLGRCVYGGIYEPSHPTADENGFRQDVLDLVKELGVTCVRYPGGNFVSNYNWEDGIGPRENRPMRRDLAWHCTETNEMGIDDFYRWSQKAGTEIMLAVNMGTRGLKAALDELEYVNGAPGTAWADQRVANGIEEPMDIKMWCIGNEMDGPWQVGHMSPEEYAGAVDKVAHAMKLAESGLELVACGSSGAYMPTFGTWEKTVLTKAYENLDFVSCHAYYFDRGHKTRAAASMQDFLASSEDMTKFIATVSDAADQAREANNGTKDIALSFDEWGVWYSDKWNEQEDQWKAEAAQGLHHEPWPKSPHLLEDIYTAADAVVEGSLMITLLKHCDRVRSASRAQLVNVIAPIMAEEHGPAWRQTTFYPFAEAALHARGQAYAPAISSPTIHTEAYGDVPAIDAVVTWDEQARTGLLLAVNRDANTPHTLTIDLSGLPGLPGLGTLALGKAQLLHEDDPYRTNTAEAPEAVTPQPLDIAMNATGTCTATLPAISWISVEFHG</sequence>
<comment type="function">
    <text evidence="3">Involved in the degradation of arabinan and is a key enzyme in the complete degradation of the plant cell wall. Catalyzes the cleavage of terminal alpha-(1-&gt;5)-arabinofuranosyl bonds in different hemicellulosic homopolysaccharides (branched and debranched arabinans). It is active with sugar beet arabinan and wheat arabinoxylan. It also exhibited activity against alpha-(1-&gt;5)-linked arabinobiose, arabinotriose, arabinotetraose, and arabinopentaose.</text>
</comment>
<comment type="catalytic activity">
    <reaction evidence="3">
        <text>Hydrolysis of terminal non-reducing alpha-L-arabinofuranoside residues in alpha-L-arabinosides.</text>
        <dbReference type="EC" id="3.2.1.55"/>
    </reaction>
</comment>
<comment type="activity regulation">
    <text evidence="3">Completely inhibited by Hg(2+) and Cu(2+) ions, whereas 1 mM Zn(2+) inhibited activity by 51%.</text>
</comment>
<comment type="biophysicochemical properties">
    <kinetics>
        <KM evidence="3">0.295 mM for p-nitrophenyl alpha-L-arabinofuranoside (pNP-Araf)(at pH 6 and 45 degrees Celsius)</KM>
        <Vmax evidence="3">0.83 umol/min/mg enzyme with arabinan as substrate (at pH 6 and 45 degrees Celsius)</Vmax>
        <Vmax evidence="3">1.22 umol/min/mg enzyme with arabinoxylan as substrate (at pH 6 and 45 degrees Celsius)</Vmax>
    </kinetics>
    <phDependence>
        <text evidence="3">Optimum pH is 6. The enzyme retains full activity at pH values from 5.5 to 7.5. After exposure to pH 4.5, the activity is reduced by 40%, and no residual activity is detected at pH values below 4.5 or above 7.5.</text>
    </phDependence>
    <temperatureDependence>
        <text evidence="3">Optimum temperature is 45 degrees Celsius. The enzymatic activity decreases significantly at temperatures below 35 degrees Celsius and above 60 degrees Celsius, although considerable levels of activity are still detected at 20 and 70 degrees Celsius.</text>
    </temperatureDependence>
</comment>
<comment type="pathway">
    <text>Glycan metabolism; L-arabinan degradation.</text>
</comment>
<comment type="subunit">
    <text evidence="5">Homohexamer; trimer of dimers.</text>
</comment>
<comment type="subcellular location">
    <subcellularLocation>
        <location evidence="5">Cytoplasm</location>
    </subcellularLocation>
</comment>
<comment type="similarity">
    <text evidence="4">Belongs to the glycosyl hydrolase 51 family.</text>
</comment>
<reference key="1">
    <citation type="journal article" date="2003" name="Appl. Environ. Microbiol.">
        <title>Purification and functional characterization of a novel alpha-L-arabinofuranosidase from Bifidobacterium longum B667.</title>
        <authorList>
            <person name="Margolles A."/>
            <person name="de los Reyes-Gavilan C.G."/>
        </authorList>
    </citation>
    <scope>NUCLEOTIDE SEQUENCE [GENOMIC DNA]</scope>
    <scope>FUNCTION</scope>
    <scope>CATALYTIC ACTIVITY</scope>
    <scope>SUBCELLULAR LOCATION</scope>
    <scope>ACTIVITY REGULATION</scope>
    <scope>BIOPHYSICOCHEMICAL PROPERTIES</scope>
    <scope>SUBSTRATE SPECIFICITY</scope>
    <scope>SUBUNIT</scope>
    <source>
        <strain>B667</strain>
    </source>
</reference>
<feature type="chain" id="PRO_0000422127" description="Intracellular exo-alpha-(1-&gt;5)-L-arabinofuranosidase">
    <location>
        <begin position="1"/>
        <end position="566"/>
    </location>
</feature>
<feature type="region of interest" description="Disordered" evidence="2">
    <location>
        <begin position="1"/>
        <end position="39"/>
    </location>
</feature>
<feature type="compositionally biased region" description="Polar residues" evidence="2">
    <location>
        <begin position="1"/>
        <end position="12"/>
    </location>
</feature>
<feature type="compositionally biased region" description="Low complexity" evidence="2">
    <location>
        <begin position="20"/>
        <end position="32"/>
    </location>
</feature>
<feature type="active site" description="Proton donor/acceptor" evidence="1">
    <location>
        <position position="215"/>
    </location>
</feature>
<feature type="active site" description="Nucleophile" evidence="1">
    <location>
        <position position="340"/>
    </location>
</feature>
<feature type="binding site" evidence="1">
    <location>
        <position position="69"/>
    </location>
    <ligand>
        <name>alpha-L-arabinofuranose</name>
        <dbReference type="ChEBI" id="CHEBI:28772"/>
    </ligand>
</feature>
<feature type="binding site" evidence="1">
    <location>
        <position position="114"/>
    </location>
    <ligand>
        <name>alpha-L-arabinofuranose</name>
        <dbReference type="ChEBI" id="CHEBI:28772"/>
    </ligand>
</feature>
<feature type="binding site" evidence="1">
    <location>
        <position position="214"/>
    </location>
    <ligand>
        <name>alpha-L-arabinofuranose</name>
        <dbReference type="ChEBI" id="CHEBI:28772"/>
    </ligand>
</feature>
<feature type="binding site" evidence="1">
    <location>
        <position position="286"/>
    </location>
    <ligand>
        <name>alpha-L-arabinofuranose</name>
        <dbReference type="ChEBI" id="CHEBI:28772"/>
    </ligand>
</feature>
<feature type="binding site" description="covalent" evidence="1">
    <location>
        <position position="340"/>
    </location>
    <ligand>
        <name>alpha-L-arabinofuranose</name>
        <dbReference type="ChEBI" id="CHEBI:28772"/>
    </ligand>
</feature>
<feature type="binding site" evidence="1">
    <location>
        <position position="409"/>
    </location>
    <ligand>
        <name>alpha-L-arabinofuranose</name>
        <dbReference type="ChEBI" id="CHEBI:28772"/>
    </ligand>
</feature>
<feature type="site" description="Important for substrate recognition" evidence="1">
    <location>
        <position position="344"/>
    </location>
</feature>
<feature type="site" description="Important for substrate recognition" evidence="1">
    <location>
        <position position="409"/>
    </location>
</feature>
<name>IABF_BIFLN</name>
<accession>Q841V6</accession>
<dbReference type="EC" id="3.2.1.55"/>
<dbReference type="EMBL" id="AY259087">
    <property type="protein sequence ID" value="AAO84266.1"/>
    <property type="molecule type" value="Genomic_DNA"/>
</dbReference>
<dbReference type="RefSeq" id="WP_013410312.1">
    <property type="nucleotide sequence ID" value="NZ_QSPR01000001.1"/>
</dbReference>
<dbReference type="SMR" id="Q841V6"/>
<dbReference type="CAZy" id="GH51">
    <property type="family name" value="Glycoside Hydrolase Family 51"/>
</dbReference>
<dbReference type="eggNOG" id="COG3534">
    <property type="taxonomic scope" value="Bacteria"/>
</dbReference>
<dbReference type="OMA" id="EYCNGEA"/>
<dbReference type="BRENDA" id="3.2.1.55">
    <property type="organism ID" value="851"/>
</dbReference>
<dbReference type="SABIO-RK" id="Q841V6"/>
<dbReference type="UniPathway" id="UPA00667"/>
<dbReference type="GO" id="GO:0005737">
    <property type="term" value="C:cytoplasm"/>
    <property type="evidence" value="ECO:0007669"/>
    <property type="project" value="UniProtKB-SubCell"/>
</dbReference>
<dbReference type="GO" id="GO:0046556">
    <property type="term" value="F:alpha-L-arabinofuranosidase activity"/>
    <property type="evidence" value="ECO:0007669"/>
    <property type="project" value="UniProtKB-EC"/>
</dbReference>
<dbReference type="GO" id="GO:0031222">
    <property type="term" value="P:arabinan catabolic process"/>
    <property type="evidence" value="ECO:0007669"/>
    <property type="project" value="UniProtKB-UniPathway"/>
</dbReference>
<dbReference type="GO" id="GO:0046373">
    <property type="term" value="P:L-arabinose metabolic process"/>
    <property type="evidence" value="ECO:0007669"/>
    <property type="project" value="InterPro"/>
</dbReference>
<dbReference type="Gene3D" id="3.20.20.80">
    <property type="entry name" value="Glycosidases"/>
    <property type="match status" value="1"/>
</dbReference>
<dbReference type="Gene3D" id="2.60.40.1180">
    <property type="entry name" value="Golgi alpha-mannosidase II"/>
    <property type="match status" value="1"/>
</dbReference>
<dbReference type="InterPro" id="IPR010720">
    <property type="entry name" value="Alpha-L-AF_C"/>
</dbReference>
<dbReference type="InterPro" id="IPR013780">
    <property type="entry name" value="Glyco_hydro_b"/>
</dbReference>
<dbReference type="InterPro" id="IPR017853">
    <property type="entry name" value="Glycoside_hydrolase_SF"/>
</dbReference>
<dbReference type="PANTHER" id="PTHR43576:SF3">
    <property type="entry name" value="ALPHA-L-ARABINOFURANOSIDASE C"/>
    <property type="match status" value="1"/>
</dbReference>
<dbReference type="PANTHER" id="PTHR43576">
    <property type="entry name" value="ALPHA-L-ARABINOFURANOSIDASE C-RELATED"/>
    <property type="match status" value="1"/>
</dbReference>
<dbReference type="Pfam" id="PF06964">
    <property type="entry name" value="Alpha-L-AF_C"/>
    <property type="match status" value="1"/>
</dbReference>
<dbReference type="SMART" id="SM00813">
    <property type="entry name" value="Alpha-L-AF_C"/>
    <property type="match status" value="1"/>
</dbReference>
<dbReference type="SUPFAM" id="SSF51445">
    <property type="entry name" value="(Trans)glycosidases"/>
    <property type="match status" value="1"/>
</dbReference>
<dbReference type="SUPFAM" id="SSF51011">
    <property type="entry name" value="Glycosyl hydrolase domain"/>
    <property type="match status" value="1"/>
</dbReference>
<gene>
    <name type="primary">abfB</name>
</gene>
<proteinExistence type="evidence at protein level"/>
<protein>
    <recommendedName>
        <fullName>Intracellular exo-alpha-(1-&gt;5)-L-arabinofuranosidase</fullName>
        <shortName>ABF</shortName>
        <ecNumber>3.2.1.55</ecNumber>
    </recommendedName>
    <alternativeName>
        <fullName>Intracellular arabinan exo-alpha-(1-&gt;5)-L-arabinosidase</fullName>
        <shortName>Arabinosidase</shortName>
    </alternativeName>
</protein>
<keyword id="KW-0119">Carbohydrate metabolism</keyword>
<keyword id="KW-0963">Cytoplasm</keyword>
<keyword id="KW-0326">Glycosidase</keyword>
<keyword id="KW-0378">Hydrolase</keyword>
<evidence type="ECO:0000250" key="1">
    <source>
        <dbReference type="UniProtKB" id="Q9XBQ3"/>
    </source>
</evidence>
<evidence type="ECO:0000256" key="2">
    <source>
        <dbReference type="SAM" id="MobiDB-lite"/>
    </source>
</evidence>
<evidence type="ECO:0000269" key="3">
    <source>
    </source>
</evidence>
<evidence type="ECO:0000305" key="4"/>
<evidence type="ECO:0000305" key="5">
    <source>
    </source>
</evidence>
<organism>
    <name type="scientific">Bifidobacterium longum</name>
    <dbReference type="NCBI Taxonomy" id="216816"/>
    <lineage>
        <taxon>Bacteria</taxon>
        <taxon>Bacillati</taxon>
        <taxon>Actinomycetota</taxon>
        <taxon>Actinomycetes</taxon>
        <taxon>Bifidobacteriales</taxon>
        <taxon>Bifidobacteriaceae</taxon>
        <taxon>Bifidobacterium</taxon>
    </lineage>
</organism>